<name>AP2S_YEAST</name>
<evidence type="ECO:0000269" key="1">
    <source>
    </source>
</evidence>
<evidence type="ECO:0000269" key="2">
    <source>
    </source>
</evidence>
<evidence type="ECO:0000305" key="3"/>
<protein>
    <recommendedName>
        <fullName>AP-2 complex subunit sigma</fullName>
    </recommendedName>
    <alternativeName>
        <fullName>Adaptin small chain</fullName>
    </alternativeName>
    <alternativeName>
        <fullName>Clathrin assembly protein 2 sigma small chain</fullName>
    </alternativeName>
    <alternativeName>
        <fullName>Clathrin coat assembly protein AP17</fullName>
    </alternativeName>
    <alternativeName>
        <fullName>Clathrin coat-associated protein AP17</fullName>
    </alternativeName>
    <alternativeName>
        <fullName>Plasma membrane adaptor AP-2 17 kDa protein</fullName>
    </alternativeName>
    <alternativeName>
        <fullName>Sigma2-adaptin</fullName>
    </alternativeName>
</protein>
<comment type="function">
    <text evidence="1">Component of the adaptor complexes which link clathrin to receptors in coated vesicles. Clathrin-associated protein complexes are believed to interact with the cytoplasmic tails of membrane proteins, leading to their selection and concentration.</text>
</comment>
<comment type="subunit">
    <text evidence="1">Adaptor protein complex 2 (AP-2) is a heterotetramer composed of two large adaptins (alpha-type subunit APL3 and beta-type subunit APL1), a medium chain (mu-type subunit APM4) and a small adaptin (sigma-type subunit APS2). Interacts with APL1.</text>
</comment>
<comment type="interaction">
    <interactant intactId="EBI-2608">
        <id>Q00381</id>
    </interactant>
    <interactant intactId="EBI-2181">
        <id>P38065</id>
        <label>APL3</label>
    </interactant>
    <organismsDiffer>false</organismsDiffer>
    <experiments>4</experiments>
</comment>
<comment type="subcellular location">
    <subcellularLocation>
        <location>Cell membrane</location>
    </subcellularLocation>
    <subcellularLocation>
        <location>Membrane</location>
        <location>Coated pit</location>
        <topology>Peripheral membrane protein</topology>
        <orientation>Cytoplasmic side</orientation>
    </subcellularLocation>
    <text>Component of the coat surrounding the cytoplasmic face of the plasma membrane coated vesicles.</text>
</comment>
<comment type="miscellaneous">
    <text evidence="2">Present with 1390 molecules/cell in log phase SD medium.</text>
</comment>
<comment type="similarity">
    <text evidence="3">Belongs to the adaptor complexes small subunit family.</text>
</comment>
<gene>
    <name type="primary">APS2</name>
    <name type="synonym">YAP17</name>
    <name type="ordered locus">YJR058C</name>
    <name type="ORF">J1720</name>
</gene>
<organism>
    <name type="scientific">Saccharomyces cerevisiae (strain ATCC 204508 / S288c)</name>
    <name type="common">Baker's yeast</name>
    <dbReference type="NCBI Taxonomy" id="559292"/>
    <lineage>
        <taxon>Eukaryota</taxon>
        <taxon>Fungi</taxon>
        <taxon>Dikarya</taxon>
        <taxon>Ascomycota</taxon>
        <taxon>Saccharomycotina</taxon>
        <taxon>Saccharomycetes</taxon>
        <taxon>Saccharomycetales</taxon>
        <taxon>Saccharomycetaceae</taxon>
        <taxon>Saccharomyces</taxon>
    </lineage>
</organism>
<proteinExistence type="evidence at protein level"/>
<dbReference type="EMBL" id="M37193">
    <property type="protein sequence ID" value="AAA35225.1"/>
    <property type="molecule type" value="Genomic_DNA"/>
</dbReference>
<dbReference type="EMBL" id="Z49558">
    <property type="protein sequence ID" value="CAA89586.1"/>
    <property type="molecule type" value="Genomic_DNA"/>
</dbReference>
<dbReference type="EMBL" id="L47993">
    <property type="protein sequence ID" value="AAB39284.1"/>
    <property type="molecule type" value="Genomic_DNA"/>
</dbReference>
<dbReference type="EMBL" id="AY557893">
    <property type="protein sequence ID" value="AAS56219.1"/>
    <property type="molecule type" value="Genomic_DNA"/>
</dbReference>
<dbReference type="EMBL" id="BK006943">
    <property type="protein sequence ID" value="DAA08845.1"/>
    <property type="molecule type" value="Genomic_DNA"/>
</dbReference>
<dbReference type="PIR" id="C40535">
    <property type="entry name" value="C40535"/>
</dbReference>
<dbReference type="RefSeq" id="NP_012592.1">
    <property type="nucleotide sequence ID" value="NM_001181716.1"/>
</dbReference>
<dbReference type="SMR" id="Q00381"/>
<dbReference type="BioGRID" id="33815">
    <property type="interactions" value="53"/>
</dbReference>
<dbReference type="ComplexPortal" id="CPX-534">
    <property type="entry name" value="Adapter complex AP-2"/>
</dbReference>
<dbReference type="DIP" id="DIP-5093N"/>
<dbReference type="FunCoup" id="Q00381">
    <property type="interactions" value="573"/>
</dbReference>
<dbReference type="IntAct" id="Q00381">
    <property type="interactions" value="7"/>
</dbReference>
<dbReference type="MINT" id="Q00381"/>
<dbReference type="STRING" id="4932.YJR058C"/>
<dbReference type="PaxDb" id="4932-YJR058C"/>
<dbReference type="PeptideAtlas" id="Q00381"/>
<dbReference type="EnsemblFungi" id="YJR058C_mRNA">
    <property type="protein sequence ID" value="YJR058C"/>
    <property type="gene ID" value="YJR058C"/>
</dbReference>
<dbReference type="GeneID" id="853521"/>
<dbReference type="KEGG" id="sce:YJR058C"/>
<dbReference type="AGR" id="SGD:S000003819"/>
<dbReference type="SGD" id="S000003819">
    <property type="gene designation" value="APS2"/>
</dbReference>
<dbReference type="VEuPathDB" id="FungiDB:YJR058C"/>
<dbReference type="eggNOG" id="KOG0935">
    <property type="taxonomic scope" value="Eukaryota"/>
</dbReference>
<dbReference type="GeneTree" id="ENSGT00970000193421"/>
<dbReference type="HOGENOM" id="CLU_061221_3_1_1"/>
<dbReference type="InParanoid" id="Q00381"/>
<dbReference type="OMA" id="QSNFVEY"/>
<dbReference type="OrthoDB" id="371463at2759"/>
<dbReference type="BioCyc" id="YEAST:G3O-31691-MONOMER"/>
<dbReference type="Reactome" id="R-SCE-437239">
    <property type="pathway name" value="Recycling pathway of L1"/>
</dbReference>
<dbReference type="Reactome" id="R-SCE-8856825">
    <property type="pathway name" value="Cargo recognition for clathrin-mediated endocytosis"/>
</dbReference>
<dbReference type="Reactome" id="R-SCE-8856828">
    <property type="pathway name" value="Clathrin-mediated endocytosis"/>
</dbReference>
<dbReference type="Reactome" id="R-SCE-8866427">
    <property type="pathway name" value="VLDLR internalisation and degradation"/>
</dbReference>
<dbReference type="Reactome" id="R-SCE-8964038">
    <property type="pathway name" value="LDL clearance"/>
</dbReference>
<dbReference type="BioGRID-ORCS" id="853521">
    <property type="hits" value="1 hit in 10 CRISPR screens"/>
</dbReference>
<dbReference type="PRO" id="PR:Q00381"/>
<dbReference type="Proteomes" id="UP000002311">
    <property type="component" value="Chromosome X"/>
</dbReference>
<dbReference type="RNAct" id="Q00381">
    <property type="molecule type" value="protein"/>
</dbReference>
<dbReference type="GO" id="GO:0030122">
    <property type="term" value="C:AP-2 adaptor complex"/>
    <property type="evidence" value="ECO:0000314"/>
    <property type="project" value="SGD"/>
</dbReference>
<dbReference type="GO" id="GO:0005935">
    <property type="term" value="C:cellular bud neck"/>
    <property type="evidence" value="ECO:0007005"/>
    <property type="project" value="SGD"/>
</dbReference>
<dbReference type="GO" id="GO:0030136">
    <property type="term" value="C:clathrin-coated vesicle"/>
    <property type="evidence" value="ECO:0000314"/>
    <property type="project" value="SGD"/>
</dbReference>
<dbReference type="GO" id="GO:0043231">
    <property type="term" value="C:intracellular membrane-bounded organelle"/>
    <property type="evidence" value="ECO:0000318"/>
    <property type="project" value="GO_Central"/>
</dbReference>
<dbReference type="GO" id="GO:0005634">
    <property type="term" value="C:nucleus"/>
    <property type="evidence" value="ECO:0007005"/>
    <property type="project" value="SGD"/>
</dbReference>
<dbReference type="GO" id="GO:0005628">
    <property type="term" value="C:prospore membrane"/>
    <property type="evidence" value="ECO:0007005"/>
    <property type="project" value="SGD"/>
</dbReference>
<dbReference type="GO" id="GO:0006897">
    <property type="term" value="P:endocytosis"/>
    <property type="evidence" value="ECO:0007669"/>
    <property type="project" value="UniProtKB-KW"/>
</dbReference>
<dbReference type="GO" id="GO:0006886">
    <property type="term" value="P:intracellular protein transport"/>
    <property type="evidence" value="ECO:0000303"/>
    <property type="project" value="ComplexPortal"/>
</dbReference>
<dbReference type="GO" id="GO:0016192">
    <property type="term" value="P:vesicle-mediated transport"/>
    <property type="evidence" value="ECO:0000318"/>
    <property type="project" value="GO_Central"/>
</dbReference>
<dbReference type="FunFam" id="3.30.450.60:FF:000010">
    <property type="entry name" value="AP complex subunit sigma"/>
    <property type="match status" value="1"/>
</dbReference>
<dbReference type="Gene3D" id="3.30.450.60">
    <property type="match status" value="1"/>
</dbReference>
<dbReference type="InterPro" id="IPR016635">
    <property type="entry name" value="AP_complex_ssu"/>
</dbReference>
<dbReference type="InterPro" id="IPR022775">
    <property type="entry name" value="AP_mu_sigma_su"/>
</dbReference>
<dbReference type="InterPro" id="IPR000804">
    <property type="entry name" value="Clathrin_sm-chain_CS"/>
</dbReference>
<dbReference type="InterPro" id="IPR011012">
    <property type="entry name" value="Longin-like_dom_sf"/>
</dbReference>
<dbReference type="PANTHER" id="PTHR11753">
    <property type="entry name" value="ADAPTOR COMPLEXES SMALL SUBUNIT FAMILY"/>
    <property type="match status" value="1"/>
</dbReference>
<dbReference type="Pfam" id="PF01217">
    <property type="entry name" value="Clat_adaptor_s"/>
    <property type="match status" value="1"/>
</dbReference>
<dbReference type="PIRSF" id="PIRSF015588">
    <property type="entry name" value="AP_complex_sigma"/>
    <property type="match status" value="1"/>
</dbReference>
<dbReference type="SUPFAM" id="SSF64356">
    <property type="entry name" value="SNARE-like"/>
    <property type="match status" value="1"/>
</dbReference>
<dbReference type="PROSITE" id="PS00989">
    <property type="entry name" value="CLAT_ADAPTOR_S"/>
    <property type="match status" value="1"/>
</dbReference>
<reference key="1">
    <citation type="journal article" date="1991" name="J. Biol. Chem.">
        <title>AP17 and AP19, the mammalian small chains of the clathrin-associated protein complexes show homology to Yap17p, their putative homolog in yeast.</title>
        <authorList>
            <person name="Kirchhausen T."/>
            <person name="Davis A.C."/>
            <person name="Frucht S."/>
            <person name="O'Brine Greco B."/>
            <person name="Payne G.S."/>
            <person name="Tubb B."/>
        </authorList>
    </citation>
    <scope>NUCLEOTIDE SEQUENCE [GENOMIC DNA]</scope>
</reference>
<reference key="2">
    <citation type="journal article" date="1996" name="Yeast">
        <title>Analysis of a 62 kb DNA sequence of chromosome X reveals 36 open reading frames and a gene cluster with a counterpart on chromosome XI.</title>
        <authorList>
            <person name="Huang M.-E."/>
            <person name="Manus V."/>
            <person name="Chuat J.-C."/>
            <person name="Galibert F."/>
        </authorList>
    </citation>
    <scope>NUCLEOTIDE SEQUENCE [GENOMIC DNA]</scope>
    <source>
        <strain>ATCC 204508 / S288c</strain>
    </source>
</reference>
<reference key="3">
    <citation type="journal article" date="1996" name="EMBO J.">
        <title>Complete nucleotide sequence of Saccharomyces cerevisiae chromosome X.</title>
        <authorList>
            <person name="Galibert F."/>
            <person name="Alexandraki D."/>
            <person name="Baur A."/>
            <person name="Boles E."/>
            <person name="Chalwatzis N."/>
            <person name="Chuat J.-C."/>
            <person name="Coster F."/>
            <person name="Cziepluch C."/>
            <person name="de Haan M."/>
            <person name="Domdey H."/>
            <person name="Durand P."/>
            <person name="Entian K.-D."/>
            <person name="Gatius M."/>
            <person name="Goffeau A."/>
            <person name="Grivell L.A."/>
            <person name="Hennemann A."/>
            <person name="Herbert C.J."/>
            <person name="Heumann K."/>
            <person name="Hilger F."/>
            <person name="Hollenberg C.P."/>
            <person name="Huang M.-E."/>
            <person name="Jacq C."/>
            <person name="Jauniaux J.-C."/>
            <person name="Katsoulou C."/>
            <person name="Kirchrath L."/>
            <person name="Kleine K."/>
            <person name="Kordes E."/>
            <person name="Koetter P."/>
            <person name="Liebl S."/>
            <person name="Louis E.J."/>
            <person name="Manus V."/>
            <person name="Mewes H.-W."/>
            <person name="Miosga T."/>
            <person name="Obermaier B."/>
            <person name="Perea J."/>
            <person name="Pohl T.M."/>
            <person name="Portetelle D."/>
            <person name="Pujol A."/>
            <person name="Purnelle B."/>
            <person name="Ramezani Rad M."/>
            <person name="Rasmussen S.W."/>
            <person name="Rose M."/>
            <person name="Rossau R."/>
            <person name="Schaaff-Gerstenschlaeger I."/>
            <person name="Smits P.H.M."/>
            <person name="Scarcez T."/>
            <person name="Soriano N."/>
            <person name="To Van D."/>
            <person name="Tzermia M."/>
            <person name="Van Broekhoven A."/>
            <person name="Vandenbol M."/>
            <person name="Wedler H."/>
            <person name="von Wettstein D."/>
            <person name="Wambutt R."/>
            <person name="Zagulski M."/>
            <person name="Zollner A."/>
            <person name="Karpfinger-Hartl L."/>
        </authorList>
    </citation>
    <scope>NUCLEOTIDE SEQUENCE [LARGE SCALE GENOMIC DNA]</scope>
    <source>
        <strain>ATCC 204508 / S288c</strain>
    </source>
</reference>
<reference key="4">
    <citation type="journal article" date="2014" name="G3 (Bethesda)">
        <title>The reference genome sequence of Saccharomyces cerevisiae: Then and now.</title>
        <authorList>
            <person name="Engel S.R."/>
            <person name="Dietrich F.S."/>
            <person name="Fisk D.G."/>
            <person name="Binkley G."/>
            <person name="Balakrishnan R."/>
            <person name="Costanzo M.C."/>
            <person name="Dwight S.S."/>
            <person name="Hitz B.C."/>
            <person name="Karra K."/>
            <person name="Nash R.S."/>
            <person name="Weng S."/>
            <person name="Wong E.D."/>
            <person name="Lloyd P."/>
            <person name="Skrzypek M.S."/>
            <person name="Miyasato S.R."/>
            <person name="Simison M."/>
            <person name="Cherry J.M."/>
        </authorList>
    </citation>
    <scope>GENOME REANNOTATION</scope>
    <source>
        <strain>ATCC 204508 / S288c</strain>
    </source>
</reference>
<reference key="5">
    <citation type="journal article" date="2007" name="Genome Res.">
        <title>Approaching a complete repository of sequence-verified protein-encoding clones for Saccharomyces cerevisiae.</title>
        <authorList>
            <person name="Hu Y."/>
            <person name="Rolfs A."/>
            <person name="Bhullar B."/>
            <person name="Murthy T.V.S."/>
            <person name="Zhu C."/>
            <person name="Berger M.F."/>
            <person name="Camargo A.A."/>
            <person name="Kelley F."/>
            <person name="McCarron S."/>
            <person name="Jepson D."/>
            <person name="Richardson A."/>
            <person name="Raphael J."/>
            <person name="Moreira D."/>
            <person name="Taycher E."/>
            <person name="Zuo D."/>
            <person name="Mohr S."/>
            <person name="Kane M.F."/>
            <person name="Williamson J."/>
            <person name="Simpson A.J.G."/>
            <person name="Bulyk M.L."/>
            <person name="Harlow E."/>
            <person name="Marsischky G."/>
            <person name="Kolodner R.D."/>
            <person name="LaBaer J."/>
        </authorList>
    </citation>
    <scope>NUCLEOTIDE SEQUENCE [GENOMIC DNA]</scope>
    <source>
        <strain>ATCC 204508 / S288c</strain>
    </source>
</reference>
<reference key="6">
    <citation type="journal article" date="1999" name="Mol. Biol. Cell">
        <title>Adaptor complex-independent clathrin function in yeast.</title>
        <authorList>
            <person name="Yeung B.G."/>
            <person name="Phan H.L."/>
            <person name="Payne G.S."/>
        </authorList>
    </citation>
    <scope>FUNCTION</scope>
    <scope>SUBUNIT</scope>
    <scope>INTERACTION WITH APL1</scope>
</reference>
<reference key="7">
    <citation type="journal article" date="2003" name="Nature">
        <title>Global analysis of protein expression in yeast.</title>
        <authorList>
            <person name="Ghaemmaghami S."/>
            <person name="Huh W.-K."/>
            <person name="Bower K."/>
            <person name="Howson R.W."/>
            <person name="Belle A."/>
            <person name="Dephoure N."/>
            <person name="O'Shea E.K."/>
            <person name="Weissman J.S."/>
        </authorList>
    </citation>
    <scope>LEVEL OF PROTEIN EXPRESSION [LARGE SCALE ANALYSIS]</scope>
</reference>
<accession>Q00381</accession>
<accession>D6VWM9</accession>
<sequence length="147" mass="17373">MAVQFILCFNKQGVVRLVRWFDVHSSDPQRSQDAIAQIYRLISSRDHKHQSNFVEFSDSTKLIYRRYAGLYFVMGVDLLDDEPIYLCHIHLFVEVLDAFFGNVCELDIVFNFYKVYMIMDEMFIGGEIQEISKDMLLERLSILDRLD</sequence>
<keyword id="KW-1003">Cell membrane</keyword>
<keyword id="KW-0168">Coated pit</keyword>
<keyword id="KW-0254">Endocytosis</keyword>
<keyword id="KW-0472">Membrane</keyword>
<keyword id="KW-0653">Protein transport</keyword>
<keyword id="KW-1185">Reference proteome</keyword>
<keyword id="KW-0813">Transport</keyword>
<feature type="chain" id="PRO_0000193814" description="AP-2 complex subunit sigma">
    <location>
        <begin position="1"/>
        <end position="147"/>
    </location>
</feature>